<evidence type="ECO:0000255" key="1">
    <source>
        <dbReference type="HAMAP-Rule" id="MF_00189"/>
    </source>
</evidence>
<feature type="chain" id="PRO_1000058474" description="Inner membrane-spanning protein YciB">
    <location>
        <begin position="1"/>
        <end position="195"/>
    </location>
</feature>
<feature type="transmembrane region" description="Helical" evidence="1">
    <location>
        <begin position="34"/>
        <end position="54"/>
    </location>
</feature>
<feature type="transmembrane region" description="Helical" evidence="1">
    <location>
        <begin position="65"/>
        <end position="85"/>
    </location>
</feature>
<feature type="transmembrane region" description="Helical" evidence="1">
    <location>
        <begin position="88"/>
        <end position="108"/>
    </location>
</feature>
<feature type="transmembrane region" description="Helical" evidence="1">
    <location>
        <begin position="131"/>
        <end position="151"/>
    </location>
</feature>
<feature type="transmembrane region" description="Helical" evidence="1">
    <location>
        <begin position="160"/>
        <end position="180"/>
    </location>
</feature>
<proteinExistence type="inferred from homology"/>
<accession>A6V2M1</accession>
<comment type="function">
    <text evidence="1">Plays a role in cell envelope biogenesis, maintenance of cell envelope integrity and membrane homeostasis.</text>
</comment>
<comment type="subcellular location">
    <subcellularLocation>
        <location evidence="1">Cell inner membrane</location>
        <topology evidence="1">Multi-pass membrane protein</topology>
    </subcellularLocation>
</comment>
<comment type="similarity">
    <text evidence="1">Belongs to the YciB family.</text>
</comment>
<name>YCIB_PSEP7</name>
<organism>
    <name type="scientific">Pseudomonas paraeruginosa (strain DSM 24068 / PA7)</name>
    <name type="common">Pseudomonas aeruginosa (strain PA7)</name>
    <dbReference type="NCBI Taxonomy" id="381754"/>
    <lineage>
        <taxon>Bacteria</taxon>
        <taxon>Pseudomonadati</taxon>
        <taxon>Pseudomonadota</taxon>
        <taxon>Gammaproteobacteria</taxon>
        <taxon>Pseudomonadales</taxon>
        <taxon>Pseudomonadaceae</taxon>
        <taxon>Pseudomonas</taxon>
        <taxon>Pseudomonas paraeruginosa</taxon>
    </lineage>
</organism>
<sequence>MKQFIDFIPLVLFFIVYKIDPQNVEFAGFNLSGIYGATATLILASVIVYGALWLKHRHLEKSQWFTLGACLVLGGLTLAFHEDTFLKWKAPLVNWLFALAFAGSHFIGDKPMIQRIMGHAIQLPQGLWVRLNIAWVVFFLVCGFANLYVVFTYPNFWVDFKVFGSLGMTLLFLIGQGIFLARHLHDADTGEKPKD</sequence>
<keyword id="KW-0997">Cell inner membrane</keyword>
<keyword id="KW-1003">Cell membrane</keyword>
<keyword id="KW-0472">Membrane</keyword>
<keyword id="KW-0812">Transmembrane</keyword>
<keyword id="KW-1133">Transmembrane helix</keyword>
<dbReference type="EMBL" id="CP000744">
    <property type="protein sequence ID" value="ABR81997.1"/>
    <property type="molecule type" value="Genomic_DNA"/>
</dbReference>
<dbReference type="RefSeq" id="WP_012074995.1">
    <property type="nucleotide sequence ID" value="NC_009656.1"/>
</dbReference>
<dbReference type="KEGG" id="pap:PSPA7_1925"/>
<dbReference type="HOGENOM" id="CLU_089554_2_0_6"/>
<dbReference type="Proteomes" id="UP000001582">
    <property type="component" value="Chromosome"/>
</dbReference>
<dbReference type="GO" id="GO:0005886">
    <property type="term" value="C:plasma membrane"/>
    <property type="evidence" value="ECO:0007669"/>
    <property type="project" value="UniProtKB-SubCell"/>
</dbReference>
<dbReference type="HAMAP" id="MF_00189">
    <property type="entry name" value="YciB"/>
    <property type="match status" value="1"/>
</dbReference>
<dbReference type="InterPro" id="IPR006008">
    <property type="entry name" value="YciB"/>
</dbReference>
<dbReference type="NCBIfam" id="TIGR00997">
    <property type="entry name" value="ispZ"/>
    <property type="match status" value="1"/>
</dbReference>
<dbReference type="NCBIfam" id="NF001325">
    <property type="entry name" value="PRK00259.1-3"/>
    <property type="match status" value="1"/>
</dbReference>
<dbReference type="NCBIfam" id="NF001327">
    <property type="entry name" value="PRK00259.1-5"/>
    <property type="match status" value="1"/>
</dbReference>
<dbReference type="PANTHER" id="PTHR36917:SF1">
    <property type="entry name" value="INNER MEMBRANE-SPANNING PROTEIN YCIB"/>
    <property type="match status" value="1"/>
</dbReference>
<dbReference type="PANTHER" id="PTHR36917">
    <property type="entry name" value="INTRACELLULAR SEPTATION PROTEIN A-RELATED"/>
    <property type="match status" value="1"/>
</dbReference>
<dbReference type="Pfam" id="PF04279">
    <property type="entry name" value="IspA"/>
    <property type="match status" value="1"/>
</dbReference>
<gene>
    <name evidence="1" type="primary">yciB</name>
    <name type="ordered locus">PSPA7_1925</name>
</gene>
<reference key="1">
    <citation type="submission" date="2007-06" db="EMBL/GenBank/DDBJ databases">
        <authorList>
            <person name="Dodson R.J."/>
            <person name="Harkins D."/>
            <person name="Paulsen I.T."/>
        </authorList>
    </citation>
    <scope>NUCLEOTIDE SEQUENCE [LARGE SCALE GENOMIC DNA]</scope>
    <source>
        <strain>DSM 24068 / PA7</strain>
    </source>
</reference>
<protein>
    <recommendedName>
        <fullName evidence="1">Inner membrane-spanning protein YciB</fullName>
    </recommendedName>
</protein>